<proteinExistence type="inferred from homology"/>
<reference key="1">
    <citation type="submission" date="2006-10" db="EMBL/GenBank/DDBJ databases">
        <authorList>
            <person name="Fleischmann R.D."/>
            <person name="Dodson R.J."/>
            <person name="Haft D.H."/>
            <person name="Merkel J.S."/>
            <person name="Nelson W.C."/>
            <person name="Fraser C.M."/>
        </authorList>
    </citation>
    <scope>NUCLEOTIDE SEQUENCE [LARGE SCALE GENOMIC DNA]</scope>
    <source>
        <strain>ATCC 700084 / mc(2)155</strain>
    </source>
</reference>
<reference key="2">
    <citation type="journal article" date="2007" name="Genome Biol.">
        <title>Interrupted coding sequences in Mycobacterium smegmatis: authentic mutations or sequencing errors?</title>
        <authorList>
            <person name="Deshayes C."/>
            <person name="Perrodou E."/>
            <person name="Gallien S."/>
            <person name="Euphrasie D."/>
            <person name="Schaeffer C."/>
            <person name="Van-Dorsselaer A."/>
            <person name="Poch O."/>
            <person name="Lecompte O."/>
            <person name="Reyrat J.-M."/>
        </authorList>
    </citation>
    <scope>NUCLEOTIDE SEQUENCE [LARGE SCALE GENOMIC DNA]</scope>
    <source>
        <strain>ATCC 700084 / mc(2)155</strain>
    </source>
</reference>
<reference key="3">
    <citation type="journal article" date="2009" name="Genome Res.">
        <title>Ortho-proteogenomics: multiple proteomes investigation through orthology and a new MS-based protocol.</title>
        <authorList>
            <person name="Gallien S."/>
            <person name="Perrodou E."/>
            <person name="Carapito C."/>
            <person name="Deshayes C."/>
            <person name="Reyrat J.-M."/>
            <person name="Van Dorsselaer A."/>
            <person name="Poch O."/>
            <person name="Schaeffer C."/>
            <person name="Lecompte O."/>
        </authorList>
    </citation>
    <scope>NUCLEOTIDE SEQUENCE [LARGE SCALE GENOMIC DNA]</scope>
    <source>
        <strain>ATCC 700084 / mc(2)155</strain>
    </source>
</reference>
<accession>A0QQS6</accession>
<accession>I7G2J7</accession>
<name>PSD_MYCS2</name>
<feature type="chain" id="PRO_1000026654" description="Phosphatidylserine decarboxylase beta chain" evidence="1">
    <location>
        <begin position="1"/>
        <end position="200"/>
    </location>
</feature>
<feature type="chain" id="PRO_1000026655" description="Phosphatidylserine decarboxylase alpha chain" evidence="1">
    <location>
        <begin position="201"/>
        <end position="232"/>
    </location>
</feature>
<feature type="active site" description="Schiff-base intermediate with substrate; via pyruvic acid" evidence="1">
    <location>
        <position position="201"/>
    </location>
</feature>
<feature type="site" description="Cleavage (non-hydrolytic); by autocatalysis" evidence="1">
    <location>
        <begin position="200"/>
        <end position="201"/>
    </location>
</feature>
<feature type="modified residue" description="Pyruvic acid (Ser); by autocatalysis" evidence="1">
    <location>
        <position position="201"/>
    </location>
</feature>
<organism>
    <name type="scientific">Mycolicibacterium smegmatis (strain ATCC 700084 / mc(2)155)</name>
    <name type="common">Mycobacterium smegmatis</name>
    <dbReference type="NCBI Taxonomy" id="246196"/>
    <lineage>
        <taxon>Bacteria</taxon>
        <taxon>Bacillati</taxon>
        <taxon>Actinomycetota</taxon>
        <taxon>Actinomycetes</taxon>
        <taxon>Mycobacteriales</taxon>
        <taxon>Mycobacteriaceae</taxon>
        <taxon>Mycolicibacterium</taxon>
    </lineage>
</organism>
<dbReference type="EC" id="4.1.1.65" evidence="1"/>
<dbReference type="EMBL" id="CP000480">
    <property type="protein sequence ID" value="ABK75810.1"/>
    <property type="molecule type" value="Genomic_DNA"/>
</dbReference>
<dbReference type="EMBL" id="CP001663">
    <property type="protein sequence ID" value="AFP37321.1"/>
    <property type="molecule type" value="Genomic_DNA"/>
</dbReference>
<dbReference type="RefSeq" id="WP_011727246.1">
    <property type="nucleotide sequence ID" value="NZ_SIJM01000010.1"/>
</dbReference>
<dbReference type="RefSeq" id="YP_885264.1">
    <property type="nucleotide sequence ID" value="NC_008596.1"/>
</dbReference>
<dbReference type="STRING" id="246196.MSMEG_0861"/>
<dbReference type="PaxDb" id="246196-MSMEI_0841"/>
<dbReference type="KEGG" id="msb:LJ00_04280"/>
<dbReference type="KEGG" id="msg:MSMEI_0841"/>
<dbReference type="KEGG" id="msm:MSMEG_0861"/>
<dbReference type="PATRIC" id="fig|246196.19.peg.852"/>
<dbReference type="eggNOG" id="COG0688">
    <property type="taxonomic scope" value="Bacteria"/>
</dbReference>
<dbReference type="OrthoDB" id="9790893at2"/>
<dbReference type="UniPathway" id="UPA00558">
    <property type="reaction ID" value="UER00616"/>
</dbReference>
<dbReference type="Proteomes" id="UP000000757">
    <property type="component" value="Chromosome"/>
</dbReference>
<dbReference type="Proteomes" id="UP000006158">
    <property type="component" value="Chromosome"/>
</dbReference>
<dbReference type="GO" id="GO:0005886">
    <property type="term" value="C:plasma membrane"/>
    <property type="evidence" value="ECO:0007669"/>
    <property type="project" value="UniProtKB-SubCell"/>
</dbReference>
<dbReference type="GO" id="GO:0004609">
    <property type="term" value="F:phosphatidylserine decarboxylase activity"/>
    <property type="evidence" value="ECO:0007669"/>
    <property type="project" value="UniProtKB-UniRule"/>
</dbReference>
<dbReference type="GO" id="GO:0006646">
    <property type="term" value="P:phosphatidylethanolamine biosynthetic process"/>
    <property type="evidence" value="ECO:0007669"/>
    <property type="project" value="UniProtKB-UniRule"/>
</dbReference>
<dbReference type="HAMAP" id="MF_00664">
    <property type="entry name" value="PS_decarb_PSD_A"/>
    <property type="match status" value="1"/>
</dbReference>
<dbReference type="InterPro" id="IPR003817">
    <property type="entry name" value="PS_Dcarbxylase"/>
</dbReference>
<dbReference type="InterPro" id="IPR033175">
    <property type="entry name" value="PSD-A"/>
</dbReference>
<dbReference type="NCBIfam" id="NF003679">
    <property type="entry name" value="PRK05305.1-3"/>
    <property type="match status" value="1"/>
</dbReference>
<dbReference type="PANTHER" id="PTHR35809">
    <property type="entry name" value="ARCHAETIDYLSERINE DECARBOXYLASE PROENZYME-RELATED"/>
    <property type="match status" value="1"/>
</dbReference>
<dbReference type="PANTHER" id="PTHR35809:SF1">
    <property type="entry name" value="ARCHAETIDYLSERINE DECARBOXYLASE PROENZYME-RELATED"/>
    <property type="match status" value="1"/>
</dbReference>
<dbReference type="Pfam" id="PF02666">
    <property type="entry name" value="PS_Dcarbxylase"/>
    <property type="match status" value="1"/>
</dbReference>
<sequence>MARRPDLQSGPERLAALVRSSIPPMHSAGLPFVGASLAVALLGRKRRWMRRAGLISAGANAAFFRHPPRVPPTRPGVVVAPADGLICLLGEATPPAELGLPDIPMQRVSIFLSVLDAHVQRAPIGGEVVAVRHRPGRFHSAELEAASEDNERNSVVIRTPEGLHIIAVQIAGLIARRIVCDVHVGDKLSIGDTYGLIRYGSRLDTYFPADARVLVSHGQRTLAGETVLAELA</sequence>
<gene>
    <name evidence="1" type="primary">psd</name>
    <name type="ordered locus">MSMEG_0861</name>
    <name type="ordered locus">MSMEI_0841</name>
</gene>
<comment type="function">
    <text evidence="1">Catalyzes the formation of phosphatidylethanolamine (PtdEtn) from phosphatidylserine (PtdSer).</text>
</comment>
<comment type="catalytic activity">
    <reaction evidence="1">
        <text>a 1,2-diacyl-sn-glycero-3-phospho-L-serine + H(+) = a 1,2-diacyl-sn-glycero-3-phosphoethanolamine + CO2</text>
        <dbReference type="Rhea" id="RHEA:20828"/>
        <dbReference type="ChEBI" id="CHEBI:15378"/>
        <dbReference type="ChEBI" id="CHEBI:16526"/>
        <dbReference type="ChEBI" id="CHEBI:57262"/>
        <dbReference type="ChEBI" id="CHEBI:64612"/>
        <dbReference type="EC" id="4.1.1.65"/>
    </reaction>
</comment>
<comment type="cofactor">
    <cofactor evidence="1">
        <name>pyruvate</name>
        <dbReference type="ChEBI" id="CHEBI:15361"/>
    </cofactor>
    <text evidence="1">Binds 1 pyruvoyl group covalently per subunit.</text>
</comment>
<comment type="pathway">
    <text evidence="1">Phospholipid metabolism; phosphatidylethanolamine biosynthesis; phosphatidylethanolamine from CDP-diacylglycerol: step 2/2.</text>
</comment>
<comment type="subunit">
    <text evidence="1">Heterodimer of a large membrane-associated beta subunit and a small pyruvoyl-containing alpha subunit.</text>
</comment>
<comment type="subcellular location">
    <subcellularLocation>
        <location evidence="1">Cell membrane</location>
        <topology evidence="1">Peripheral membrane protein</topology>
    </subcellularLocation>
</comment>
<comment type="PTM">
    <text evidence="1">Is synthesized initially as an inactive proenzyme. Formation of the active enzyme involves a self-maturation process in which the active site pyruvoyl group is generated from an internal serine residue via an autocatalytic post-translational modification. Two non-identical subunits are generated from the proenzyme in this reaction, and the pyruvate is formed at the N-terminus of the alpha chain, which is derived from the carboxyl end of the proenzyme. The post-translation cleavage follows an unusual pathway, termed non-hydrolytic serinolysis, in which the side chain hydroxyl group of the serine supplies its oxygen atom to form the C-terminus of the beta chain, while the remainder of the serine residue undergoes an oxidative deamination to produce ammonia and the pyruvoyl prosthetic group on the alpha chain.</text>
</comment>
<comment type="similarity">
    <text evidence="1">Belongs to the phosphatidylserine decarboxylase family. PSD-A subfamily.</text>
</comment>
<evidence type="ECO:0000255" key="1">
    <source>
        <dbReference type="HAMAP-Rule" id="MF_00664"/>
    </source>
</evidence>
<keyword id="KW-1003">Cell membrane</keyword>
<keyword id="KW-0210">Decarboxylase</keyword>
<keyword id="KW-0444">Lipid biosynthesis</keyword>
<keyword id="KW-0443">Lipid metabolism</keyword>
<keyword id="KW-0456">Lyase</keyword>
<keyword id="KW-0472">Membrane</keyword>
<keyword id="KW-0594">Phospholipid biosynthesis</keyword>
<keyword id="KW-1208">Phospholipid metabolism</keyword>
<keyword id="KW-0670">Pyruvate</keyword>
<keyword id="KW-1185">Reference proteome</keyword>
<keyword id="KW-0865">Zymogen</keyword>
<protein>
    <recommendedName>
        <fullName evidence="1">Phosphatidylserine decarboxylase proenzyme</fullName>
        <ecNumber evidence="1">4.1.1.65</ecNumber>
    </recommendedName>
    <component>
        <recommendedName>
            <fullName evidence="1">Phosphatidylserine decarboxylase alpha chain</fullName>
        </recommendedName>
    </component>
    <component>
        <recommendedName>
            <fullName evidence="1">Phosphatidylserine decarboxylase beta chain</fullName>
        </recommendedName>
    </component>
</protein>